<organism>
    <name type="scientific">Adiantum capillus-veneris</name>
    <name type="common">Maidenhair fern</name>
    <dbReference type="NCBI Taxonomy" id="13818"/>
    <lineage>
        <taxon>Eukaryota</taxon>
        <taxon>Viridiplantae</taxon>
        <taxon>Streptophyta</taxon>
        <taxon>Embryophyta</taxon>
        <taxon>Tracheophyta</taxon>
        <taxon>Polypodiopsida</taxon>
        <taxon>Polypodiidae</taxon>
        <taxon>Polypodiales</taxon>
        <taxon>Pteridineae</taxon>
        <taxon>Pteridaceae</taxon>
        <taxon>Vittarioideae</taxon>
        <taxon>Adiantum</taxon>
    </lineage>
</organism>
<protein>
    <recommendedName>
        <fullName evidence="2">Photosystem II D2 protein</fullName>
        <shortName evidence="2">PSII D2 protein</shortName>
        <ecNumber evidence="2">1.10.3.9</ecNumber>
    </recommendedName>
    <alternativeName>
        <fullName evidence="2">Photosystem Q(A) protein</fullName>
    </alternativeName>
</protein>
<keyword id="KW-0007">Acetylation</keyword>
<keyword id="KW-0148">Chlorophyll</keyword>
<keyword id="KW-0150">Chloroplast</keyword>
<keyword id="KW-0157">Chromophore</keyword>
<keyword id="KW-0249">Electron transport</keyword>
<keyword id="KW-0408">Iron</keyword>
<keyword id="KW-0460">Magnesium</keyword>
<keyword id="KW-0472">Membrane</keyword>
<keyword id="KW-0479">Metal-binding</keyword>
<keyword id="KW-0560">Oxidoreductase</keyword>
<keyword id="KW-0597">Phosphoprotein</keyword>
<keyword id="KW-0602">Photosynthesis</keyword>
<keyword id="KW-0604">Photosystem II</keyword>
<keyword id="KW-0934">Plastid</keyword>
<keyword id="KW-0793">Thylakoid</keyword>
<keyword id="KW-0812">Transmembrane</keyword>
<keyword id="KW-1133">Transmembrane helix</keyword>
<keyword id="KW-0813">Transport</keyword>
<gene>
    <name evidence="2" type="primary">psbD</name>
</gene>
<accession>Q85FM2</accession>
<accession>Q9TNI8</accession>
<dbReference type="EC" id="1.10.3.9" evidence="2"/>
<dbReference type="EMBL" id="AY178864">
    <property type="protein sequence ID" value="AAP29389.1"/>
    <property type="molecule type" value="Genomic_DNA"/>
</dbReference>
<dbReference type="EMBL" id="AB013682">
    <property type="protein sequence ID" value="BAA83458.1"/>
    <property type="molecule type" value="Genomic_DNA"/>
</dbReference>
<dbReference type="RefSeq" id="NP_848057.1">
    <property type="nucleotide sequence ID" value="NC_004766.1"/>
</dbReference>
<dbReference type="SMR" id="Q85FM2"/>
<dbReference type="GeneID" id="807381"/>
<dbReference type="OrthoDB" id="34776at2759"/>
<dbReference type="GO" id="GO:0009535">
    <property type="term" value="C:chloroplast thylakoid membrane"/>
    <property type="evidence" value="ECO:0007669"/>
    <property type="project" value="UniProtKB-SubCell"/>
</dbReference>
<dbReference type="GO" id="GO:0009523">
    <property type="term" value="C:photosystem II"/>
    <property type="evidence" value="ECO:0007669"/>
    <property type="project" value="UniProtKB-KW"/>
</dbReference>
<dbReference type="GO" id="GO:0016168">
    <property type="term" value="F:chlorophyll binding"/>
    <property type="evidence" value="ECO:0007669"/>
    <property type="project" value="UniProtKB-UniRule"/>
</dbReference>
<dbReference type="GO" id="GO:0045156">
    <property type="term" value="F:electron transporter, transferring electrons within the cyclic electron transport pathway of photosynthesis activity"/>
    <property type="evidence" value="ECO:0007669"/>
    <property type="project" value="InterPro"/>
</dbReference>
<dbReference type="GO" id="GO:0005506">
    <property type="term" value="F:iron ion binding"/>
    <property type="evidence" value="ECO:0007669"/>
    <property type="project" value="UniProtKB-UniRule"/>
</dbReference>
<dbReference type="GO" id="GO:0010242">
    <property type="term" value="F:oxygen evolving activity"/>
    <property type="evidence" value="ECO:0007669"/>
    <property type="project" value="UniProtKB-EC"/>
</dbReference>
<dbReference type="GO" id="GO:0009772">
    <property type="term" value="P:photosynthetic electron transport in photosystem II"/>
    <property type="evidence" value="ECO:0007669"/>
    <property type="project" value="InterPro"/>
</dbReference>
<dbReference type="CDD" id="cd09288">
    <property type="entry name" value="Photosystem-II_D2"/>
    <property type="match status" value="1"/>
</dbReference>
<dbReference type="FunFam" id="1.20.85.10:FF:000001">
    <property type="entry name" value="photosystem II D2 protein-like"/>
    <property type="match status" value="1"/>
</dbReference>
<dbReference type="Gene3D" id="1.20.85.10">
    <property type="entry name" value="Photosystem II protein D1-like"/>
    <property type="match status" value="1"/>
</dbReference>
<dbReference type="HAMAP" id="MF_01383">
    <property type="entry name" value="PSII_PsbD_D2"/>
    <property type="match status" value="1"/>
</dbReference>
<dbReference type="InterPro" id="IPR055266">
    <property type="entry name" value="D1/D2"/>
</dbReference>
<dbReference type="InterPro" id="IPR036854">
    <property type="entry name" value="Photo_II_D1/D2_sf"/>
</dbReference>
<dbReference type="InterPro" id="IPR000484">
    <property type="entry name" value="Photo_RC_L/M"/>
</dbReference>
<dbReference type="InterPro" id="IPR055265">
    <property type="entry name" value="Photo_RC_L/M_CS"/>
</dbReference>
<dbReference type="InterPro" id="IPR005868">
    <property type="entry name" value="PSII_PsbD/D2"/>
</dbReference>
<dbReference type="NCBIfam" id="TIGR01152">
    <property type="entry name" value="psbD"/>
    <property type="match status" value="1"/>
</dbReference>
<dbReference type="PANTHER" id="PTHR33149:SF12">
    <property type="entry name" value="PHOTOSYSTEM II D2 PROTEIN"/>
    <property type="match status" value="1"/>
</dbReference>
<dbReference type="PANTHER" id="PTHR33149">
    <property type="entry name" value="PHOTOSYSTEM II PROTEIN D1"/>
    <property type="match status" value="1"/>
</dbReference>
<dbReference type="Pfam" id="PF00124">
    <property type="entry name" value="Photo_RC"/>
    <property type="match status" value="1"/>
</dbReference>
<dbReference type="PRINTS" id="PR00256">
    <property type="entry name" value="REACTNCENTRE"/>
</dbReference>
<dbReference type="SUPFAM" id="SSF81483">
    <property type="entry name" value="Bacterial photosystem II reaction centre, L and M subunits"/>
    <property type="match status" value="1"/>
</dbReference>
<dbReference type="PROSITE" id="PS00244">
    <property type="entry name" value="REACTION_CENTER"/>
    <property type="match status" value="1"/>
</dbReference>
<feature type="initiator methionine" description="Removed" evidence="1">
    <location>
        <position position="1"/>
    </location>
</feature>
<feature type="chain" id="PRO_0000090495" description="Photosystem II D2 protein">
    <location>
        <begin position="2"/>
        <end position="353"/>
    </location>
</feature>
<feature type="transmembrane region" description="Helical" evidence="2">
    <location>
        <begin position="41"/>
        <end position="61"/>
    </location>
</feature>
<feature type="transmembrane region" description="Helical" evidence="2">
    <location>
        <begin position="125"/>
        <end position="141"/>
    </location>
</feature>
<feature type="transmembrane region" description="Helical" evidence="2">
    <location>
        <begin position="153"/>
        <end position="166"/>
    </location>
</feature>
<feature type="transmembrane region" description="Helical" evidence="2">
    <location>
        <begin position="208"/>
        <end position="228"/>
    </location>
</feature>
<feature type="transmembrane region" description="Helical" evidence="2">
    <location>
        <begin position="279"/>
        <end position="295"/>
    </location>
</feature>
<feature type="binding site" description="axial binding residue" evidence="2">
    <location>
        <position position="118"/>
    </location>
    <ligand>
        <name>chlorophyll a</name>
        <dbReference type="ChEBI" id="CHEBI:58416"/>
        <label>ChlzD2</label>
    </ligand>
    <ligandPart>
        <name>Mg</name>
        <dbReference type="ChEBI" id="CHEBI:25107"/>
    </ligandPart>
</feature>
<feature type="binding site" evidence="2">
    <location>
        <position position="130"/>
    </location>
    <ligand>
        <name>pheophytin a</name>
        <dbReference type="ChEBI" id="CHEBI:136840"/>
        <label>D2</label>
    </ligand>
</feature>
<feature type="binding site" evidence="2">
    <location>
        <position position="143"/>
    </location>
    <ligand>
        <name>pheophytin a</name>
        <dbReference type="ChEBI" id="CHEBI:136840"/>
        <label>D2</label>
    </ligand>
</feature>
<feature type="binding site" description="axial binding residue" evidence="2">
    <location>
        <position position="198"/>
    </location>
    <ligand>
        <name>chlorophyll a</name>
        <dbReference type="ChEBI" id="CHEBI:58416"/>
        <label>PD2</label>
    </ligand>
    <ligandPart>
        <name>Mg</name>
        <dbReference type="ChEBI" id="CHEBI:25107"/>
    </ligandPart>
</feature>
<feature type="binding site" evidence="2">
    <location>
        <position position="215"/>
    </location>
    <ligand>
        <name>a plastoquinone</name>
        <dbReference type="ChEBI" id="CHEBI:17757"/>
        <label>Q(A)</label>
    </ligand>
</feature>
<feature type="binding site" evidence="2">
    <location>
        <position position="215"/>
    </location>
    <ligand>
        <name>Fe cation</name>
        <dbReference type="ChEBI" id="CHEBI:24875"/>
        <note>ligand shared with heterodimeric partner</note>
    </ligand>
</feature>
<feature type="binding site" evidence="2">
    <location>
        <position position="262"/>
    </location>
    <ligand>
        <name>a plastoquinone</name>
        <dbReference type="ChEBI" id="CHEBI:17757"/>
        <label>Q(A)</label>
    </ligand>
</feature>
<feature type="binding site" evidence="2">
    <location>
        <position position="269"/>
    </location>
    <ligand>
        <name>Fe cation</name>
        <dbReference type="ChEBI" id="CHEBI:24875"/>
        <note>ligand shared with heterodimeric partner</note>
    </ligand>
</feature>
<feature type="modified residue" description="N-acetylthreonine" evidence="1">
    <location>
        <position position="2"/>
    </location>
</feature>
<feature type="modified residue" description="Phosphothreonine" evidence="1">
    <location>
        <position position="2"/>
    </location>
</feature>
<proteinExistence type="evidence at transcript level"/>
<name>PSBD_ADICA</name>
<sequence length="353" mass="39461">MTIAIGKSSKEPKDLFDSMDDWLRRDRFVFVGWSGLLLFPTAYFALGGWFTGTTFVTSWYTHGLASSYLEGCNFLTAAVSTPANSLAHSLLLLWGPEAQGDFTRWCQLGGLWTFVALHGSFALIGFMLRQFELARSVQLRPYNAVAFSGPIAVFVSVFLIYPLGQSGWFFAPSFGVAAIFRFILFFQGFHNWTLNPFHMMGVAGVLGAALLCAIHGATVENTLFEDGDGANTFRAFNPTQSEETYSMVTANRFWSQIFGVAFSNKRWLHFFMLFVPVTGLWMSAIGVVGLALNLRAYDFVSQEIRAAEDPEFETFYTKNILLNEGIRAWMAAQDQPHENLVFPEEVLPRGNAL</sequence>
<evidence type="ECO:0000250" key="1">
    <source>
        <dbReference type="UniProtKB" id="P56761"/>
    </source>
</evidence>
<evidence type="ECO:0000255" key="2">
    <source>
        <dbReference type="HAMAP-Rule" id="MF_01383"/>
    </source>
</evidence>
<comment type="function">
    <text evidence="2">Photosystem II (PSII) is a light-driven water:plastoquinone oxidoreductase that uses light energy to abstract electrons from H(2)O, generating O(2) and a proton gradient subsequently used for ATP formation. It consists of a core antenna complex that captures photons, and an electron transfer chain that converts photonic excitation into a charge separation. The D1/D2 (PsbA/PsbD) reaction center heterodimer binds P680, the primary electron donor of PSII as well as several subsequent electron acceptors. D2 is needed for assembly of a stable PSII complex.</text>
</comment>
<comment type="catalytic activity">
    <reaction evidence="2">
        <text>2 a plastoquinone + 4 hnu + 2 H2O = 2 a plastoquinol + O2</text>
        <dbReference type="Rhea" id="RHEA:36359"/>
        <dbReference type="Rhea" id="RHEA-COMP:9561"/>
        <dbReference type="Rhea" id="RHEA-COMP:9562"/>
        <dbReference type="ChEBI" id="CHEBI:15377"/>
        <dbReference type="ChEBI" id="CHEBI:15379"/>
        <dbReference type="ChEBI" id="CHEBI:17757"/>
        <dbReference type="ChEBI" id="CHEBI:30212"/>
        <dbReference type="ChEBI" id="CHEBI:62192"/>
        <dbReference type="EC" id="1.10.3.9"/>
    </reaction>
</comment>
<comment type="cofactor">
    <text evidence="2">The D1/D2 heterodimer binds P680, chlorophylls that are the primary electron donor of PSII, and subsequent electron acceptors. It shares a non-heme iron and each subunit binds pheophytin, quinone, additional chlorophylls, carotenoids and lipids. There is also a Cl(-1) ion associated with D1 and D2, which is required for oxygen evolution. The PSII complex binds additional chlorophylls, carotenoids and specific lipids.</text>
</comment>
<comment type="subunit">
    <text evidence="2">PSII is composed of 1 copy each of membrane proteins PsbA, PsbB, PsbC, PsbD, PsbE, PsbF, PsbH, PsbI, PsbJ, PsbK, PsbL, PsbM, PsbT, PsbX, PsbY, PsbZ, Psb30/Ycf12, at least 3 peripheral proteins of the oxygen-evolving complex and a large number of cofactors. It forms dimeric complexes.</text>
</comment>
<comment type="subcellular location">
    <subcellularLocation>
        <location evidence="2">Plastid</location>
        <location evidence="2">Chloroplast thylakoid membrane</location>
        <topology evidence="2">Multi-pass membrane protein</topology>
    </subcellularLocation>
</comment>
<comment type="miscellaneous">
    <text evidence="2">2 of the reaction center chlorophylls (ChlD1 and ChlD2) are entirely coordinated by water.</text>
</comment>
<comment type="similarity">
    <text evidence="2">Belongs to the reaction center PufL/M/PsbA/D family.</text>
</comment>
<geneLocation type="chloroplast"/>
<reference key="1">
    <citation type="journal article" date="2003" name="DNA Res.">
        <title>Complete nucleotide sequence of the chloroplast genome from a leptosporangiate fern, Adiantum capillus-veneris L.</title>
        <authorList>
            <person name="Wolf P.G."/>
            <person name="Rowe C.A."/>
            <person name="Sinclair R.B."/>
            <person name="Hasebe M."/>
        </authorList>
    </citation>
    <scope>NUCLEOTIDE SEQUENCE [LARGE SCALE GENOMIC DNA]</scope>
</reference>
<reference key="2">
    <citation type="journal article" date="2004" name="Gene">
        <title>High levels of RNA editing in a vascular plant chloroplast genome: analysis of transcripts from the fern Adiantum capillus-veneris.</title>
        <authorList>
            <person name="Wolf P.G."/>
            <person name="Rowe C.A."/>
            <person name="Hasebe M."/>
        </authorList>
    </citation>
    <scope>NUCLEOTIDE SEQUENCE [GENOMIC DNA]</scope>
    <scope>ABSENCE OF RNA EDITING</scope>
    <source>
        <tissue>Frond</tissue>
    </source>
</reference>
<reference key="3">
    <citation type="journal article" date="1999" name="Mol. Biol. Evol.">
        <title>Molecular phylogenetic analysis among bryophytes and tracheophytes based on combined data of plastid coded genes and the 18S rRNA gene.</title>
        <authorList>
            <person name="Nishiyama T."/>
            <person name="Kato M."/>
        </authorList>
    </citation>
    <scope>NUCLEOTIDE SEQUENCE [GENOMIC DNA] OF 24-322</scope>
</reference>